<protein>
    <recommendedName>
        <fullName evidence="3">Large ribosomal subunit protein uL15A</fullName>
    </recommendedName>
    <alternativeName>
        <fullName>60S ribosomal protein L28-A</fullName>
    </alternativeName>
    <alternativeName>
        <fullName>L27A</fullName>
    </alternativeName>
    <alternativeName>
        <fullName>L29</fullName>
    </alternativeName>
</protein>
<evidence type="ECO:0000250" key="1">
    <source>
        <dbReference type="UniProtKB" id="P02406"/>
    </source>
</evidence>
<evidence type="ECO:0000256" key="2">
    <source>
        <dbReference type="SAM" id="MobiDB-lite"/>
    </source>
</evidence>
<evidence type="ECO:0000305" key="3"/>
<evidence type="ECO:0007829" key="4">
    <source>
        <dbReference type="PDB" id="8ETC"/>
    </source>
</evidence>
<evidence type="ECO:0007829" key="5">
    <source>
        <dbReference type="PDB" id="8ETG"/>
    </source>
</evidence>
<accession>P36585</accession>
<keyword id="KW-0002">3D-structure</keyword>
<keyword id="KW-0963">Cytoplasm</keyword>
<keyword id="KW-1185">Reference proteome</keyword>
<keyword id="KW-0687">Ribonucleoprotein</keyword>
<keyword id="KW-0689">Ribosomal protein</keyword>
<dbReference type="EMBL" id="X57207">
    <property type="protein sequence ID" value="CAA40492.1"/>
    <property type="molecule type" value="Genomic_DNA"/>
</dbReference>
<dbReference type="EMBL" id="X80929">
    <property type="protein sequence ID" value="CAA56901.1"/>
    <property type="molecule type" value="Genomic_DNA"/>
</dbReference>
<dbReference type="EMBL" id="CU329672">
    <property type="protein sequence ID" value="CAA21962.1"/>
    <property type="molecule type" value="Genomic_DNA"/>
</dbReference>
<dbReference type="PIR" id="S60002">
    <property type="entry name" value="S25593"/>
</dbReference>
<dbReference type="RefSeq" id="NP_587907.1">
    <property type="nucleotide sequence ID" value="NM_001022899.2"/>
</dbReference>
<dbReference type="PDB" id="8ESQ">
    <property type="method" value="EM"/>
    <property type="resolution" value="2.80 A"/>
    <property type="chains" value="a=1-148"/>
</dbReference>
<dbReference type="PDB" id="8ESR">
    <property type="method" value="EM"/>
    <property type="resolution" value="3.20 A"/>
    <property type="chains" value="a=1-148"/>
</dbReference>
<dbReference type="PDB" id="8ETC">
    <property type="method" value="EM"/>
    <property type="resolution" value="3.10 A"/>
    <property type="chains" value="a=1-148"/>
</dbReference>
<dbReference type="PDB" id="8ETG">
    <property type="method" value="EM"/>
    <property type="resolution" value="3.40 A"/>
    <property type="chains" value="a=1-148"/>
</dbReference>
<dbReference type="PDB" id="8ETJ">
    <property type="method" value="EM"/>
    <property type="resolution" value="3.20 A"/>
    <property type="chains" value="a=1-148"/>
</dbReference>
<dbReference type="PDB" id="8EUG">
    <property type="method" value="EM"/>
    <property type="resolution" value="2.80 A"/>
    <property type="chains" value="a=1-148"/>
</dbReference>
<dbReference type="PDB" id="8EUI">
    <property type="method" value="EM"/>
    <property type="resolution" value="3.10 A"/>
    <property type="chains" value="a=1-148"/>
</dbReference>
<dbReference type="PDBsum" id="8ESQ"/>
<dbReference type="PDBsum" id="8ESR"/>
<dbReference type="PDBsum" id="8ETC"/>
<dbReference type="PDBsum" id="8ETG"/>
<dbReference type="PDBsum" id="8ETJ"/>
<dbReference type="PDBsum" id="8EUG"/>
<dbReference type="PDBsum" id="8EUI"/>
<dbReference type="SMR" id="P36585"/>
<dbReference type="BioGRID" id="276109">
    <property type="interactions" value="11"/>
</dbReference>
<dbReference type="FunCoup" id="P36585">
    <property type="interactions" value="468"/>
</dbReference>
<dbReference type="IntAct" id="P36585">
    <property type="interactions" value="1"/>
</dbReference>
<dbReference type="STRING" id="284812.P36585"/>
<dbReference type="iPTMnet" id="P36585"/>
<dbReference type="PaxDb" id="4896-SPCC5E4.07.1"/>
<dbReference type="EnsemblFungi" id="SPCC5E4.07.1">
    <property type="protein sequence ID" value="SPCC5E4.07.1:pep"/>
    <property type="gene ID" value="SPCC5E4.07"/>
</dbReference>
<dbReference type="GeneID" id="2539548"/>
<dbReference type="KEGG" id="spo:2539548"/>
<dbReference type="PomBase" id="SPCC5E4.07">
    <property type="gene designation" value="rpl2802"/>
</dbReference>
<dbReference type="VEuPathDB" id="FungiDB:SPCC5E4.07"/>
<dbReference type="eggNOG" id="KOG1742">
    <property type="taxonomic scope" value="Eukaryota"/>
</dbReference>
<dbReference type="HOGENOM" id="CLU_109163_1_0_1"/>
<dbReference type="InParanoid" id="P36585"/>
<dbReference type="OMA" id="WGRVGQH"/>
<dbReference type="PhylomeDB" id="P36585"/>
<dbReference type="Reactome" id="R-SPO-156827">
    <property type="pathway name" value="L13a-mediated translational silencing of Ceruloplasmin expression"/>
</dbReference>
<dbReference type="Reactome" id="R-SPO-1799339">
    <property type="pathway name" value="SRP-dependent cotranslational protein targeting to membrane"/>
</dbReference>
<dbReference type="Reactome" id="R-SPO-72689">
    <property type="pathway name" value="Formation of a pool of free 40S subunits"/>
</dbReference>
<dbReference type="Reactome" id="R-SPO-72706">
    <property type="pathway name" value="GTP hydrolysis and joining of the 60S ribosomal subunit"/>
</dbReference>
<dbReference type="Reactome" id="R-SPO-975956">
    <property type="pathway name" value="Nonsense Mediated Decay (NMD) independent of the Exon Junction Complex (EJC)"/>
</dbReference>
<dbReference type="Reactome" id="R-SPO-975957">
    <property type="pathway name" value="Nonsense Mediated Decay (NMD) enhanced by the Exon Junction Complex (EJC)"/>
</dbReference>
<dbReference type="PRO" id="PR:P36585"/>
<dbReference type="Proteomes" id="UP000002485">
    <property type="component" value="Chromosome III"/>
</dbReference>
<dbReference type="GO" id="GO:0022625">
    <property type="term" value="C:cytosolic large ribosomal subunit"/>
    <property type="evidence" value="ECO:0000318"/>
    <property type="project" value="GO_Central"/>
</dbReference>
<dbReference type="GO" id="GO:0030684">
    <property type="term" value="C:preribosome"/>
    <property type="evidence" value="ECO:0000314"/>
    <property type="project" value="PomBase"/>
</dbReference>
<dbReference type="GO" id="GO:0003735">
    <property type="term" value="F:structural constituent of ribosome"/>
    <property type="evidence" value="ECO:0000318"/>
    <property type="project" value="GO_Central"/>
</dbReference>
<dbReference type="GO" id="GO:0002181">
    <property type="term" value="P:cytoplasmic translation"/>
    <property type="evidence" value="ECO:0000266"/>
    <property type="project" value="PomBase"/>
</dbReference>
<dbReference type="FunFam" id="3.100.10.10:FF:000002">
    <property type="entry name" value="60S ribosomal protein L27a"/>
    <property type="match status" value="1"/>
</dbReference>
<dbReference type="Gene3D" id="3.100.10.10">
    <property type="match status" value="1"/>
</dbReference>
<dbReference type="HAMAP" id="MF_01341">
    <property type="entry name" value="Ribosomal_uL15"/>
    <property type="match status" value="1"/>
</dbReference>
<dbReference type="InterPro" id="IPR030878">
    <property type="entry name" value="Ribosomal_uL15"/>
</dbReference>
<dbReference type="InterPro" id="IPR021131">
    <property type="entry name" value="Ribosomal_uL15/eL18"/>
</dbReference>
<dbReference type="InterPro" id="IPR036227">
    <property type="entry name" value="Ribosomal_uL15/eL18_sf"/>
</dbReference>
<dbReference type="InterPro" id="IPR001196">
    <property type="entry name" value="Ribosomal_uL15_CS"/>
</dbReference>
<dbReference type="PANTHER" id="PTHR11721">
    <property type="entry name" value="60S RIBOSOMAL PROTEIN L27A"/>
    <property type="match status" value="1"/>
</dbReference>
<dbReference type="PANTHER" id="PTHR11721:SF3">
    <property type="entry name" value="LARGE RIBOSOMAL SUBUNIT PROTEIN UL15"/>
    <property type="match status" value="1"/>
</dbReference>
<dbReference type="Pfam" id="PF00828">
    <property type="entry name" value="Ribosomal_L27A"/>
    <property type="match status" value="1"/>
</dbReference>
<dbReference type="SUPFAM" id="SSF52080">
    <property type="entry name" value="Ribosomal proteins L15p and L18e"/>
    <property type="match status" value="1"/>
</dbReference>
<dbReference type="PROSITE" id="PS00475">
    <property type="entry name" value="RIBOSOMAL_L15"/>
    <property type="match status" value="1"/>
</dbReference>
<reference key="1">
    <citation type="submission" date="1991-01" db="EMBL/GenBank/DDBJ databases">
        <authorList>
            <person name="Kwart M."/>
            <person name="Gross T."/>
        </authorList>
    </citation>
    <scope>NUCLEOTIDE SEQUENCE [GENOMIC DNA]</scope>
    <source>
        <strain>972 / ATCC 24843</strain>
    </source>
</reference>
<reference key="2">
    <citation type="journal article" date="1995" name="Mol. Cell. Biol.">
        <title>The rad18 gene of Schizosaccharomyces pombe defines a new subgroup of the SMC superfamily involved in DNA repair.</title>
        <authorList>
            <person name="Lehmann A.R."/>
            <person name="Walicka M."/>
            <person name="Griffiths D.J.F."/>
            <person name="Murray J.M."/>
            <person name="Watts F.Z."/>
            <person name="McCready S."/>
            <person name="Carr A.M."/>
        </authorList>
    </citation>
    <scope>NUCLEOTIDE SEQUENCE [GENOMIC DNA]</scope>
</reference>
<reference key="3">
    <citation type="journal article" date="2002" name="Nature">
        <title>The genome sequence of Schizosaccharomyces pombe.</title>
        <authorList>
            <person name="Wood V."/>
            <person name="Gwilliam R."/>
            <person name="Rajandream M.A."/>
            <person name="Lyne M.H."/>
            <person name="Lyne R."/>
            <person name="Stewart A."/>
            <person name="Sgouros J.G."/>
            <person name="Peat N."/>
            <person name="Hayles J."/>
            <person name="Baker S.G."/>
            <person name="Basham D."/>
            <person name="Bowman S."/>
            <person name="Brooks K."/>
            <person name="Brown D."/>
            <person name="Brown S."/>
            <person name="Chillingworth T."/>
            <person name="Churcher C.M."/>
            <person name="Collins M."/>
            <person name="Connor R."/>
            <person name="Cronin A."/>
            <person name="Davis P."/>
            <person name="Feltwell T."/>
            <person name="Fraser A."/>
            <person name="Gentles S."/>
            <person name="Goble A."/>
            <person name="Hamlin N."/>
            <person name="Harris D.E."/>
            <person name="Hidalgo J."/>
            <person name="Hodgson G."/>
            <person name="Holroyd S."/>
            <person name="Hornsby T."/>
            <person name="Howarth S."/>
            <person name="Huckle E.J."/>
            <person name="Hunt S."/>
            <person name="Jagels K."/>
            <person name="James K.D."/>
            <person name="Jones L."/>
            <person name="Jones M."/>
            <person name="Leather S."/>
            <person name="McDonald S."/>
            <person name="McLean J."/>
            <person name="Mooney P."/>
            <person name="Moule S."/>
            <person name="Mungall K.L."/>
            <person name="Murphy L.D."/>
            <person name="Niblett D."/>
            <person name="Odell C."/>
            <person name="Oliver K."/>
            <person name="O'Neil S."/>
            <person name="Pearson D."/>
            <person name="Quail M.A."/>
            <person name="Rabbinowitsch E."/>
            <person name="Rutherford K.M."/>
            <person name="Rutter S."/>
            <person name="Saunders D."/>
            <person name="Seeger K."/>
            <person name="Sharp S."/>
            <person name="Skelton J."/>
            <person name="Simmonds M.N."/>
            <person name="Squares R."/>
            <person name="Squares S."/>
            <person name="Stevens K."/>
            <person name="Taylor K."/>
            <person name="Taylor R.G."/>
            <person name="Tivey A."/>
            <person name="Walsh S.V."/>
            <person name="Warren T."/>
            <person name="Whitehead S."/>
            <person name="Woodward J.R."/>
            <person name="Volckaert G."/>
            <person name="Aert R."/>
            <person name="Robben J."/>
            <person name="Grymonprez B."/>
            <person name="Weltjens I."/>
            <person name="Vanstreels E."/>
            <person name="Rieger M."/>
            <person name="Schaefer M."/>
            <person name="Mueller-Auer S."/>
            <person name="Gabel C."/>
            <person name="Fuchs M."/>
            <person name="Duesterhoeft A."/>
            <person name="Fritzc C."/>
            <person name="Holzer E."/>
            <person name="Moestl D."/>
            <person name="Hilbert H."/>
            <person name="Borzym K."/>
            <person name="Langer I."/>
            <person name="Beck A."/>
            <person name="Lehrach H."/>
            <person name="Reinhardt R."/>
            <person name="Pohl T.M."/>
            <person name="Eger P."/>
            <person name="Zimmermann W."/>
            <person name="Wedler H."/>
            <person name="Wambutt R."/>
            <person name="Purnelle B."/>
            <person name="Goffeau A."/>
            <person name="Cadieu E."/>
            <person name="Dreano S."/>
            <person name="Gloux S."/>
            <person name="Lelaure V."/>
            <person name="Mottier S."/>
            <person name="Galibert F."/>
            <person name="Aves S.J."/>
            <person name="Xiang Z."/>
            <person name="Hunt C."/>
            <person name="Moore K."/>
            <person name="Hurst S.M."/>
            <person name="Lucas M."/>
            <person name="Rochet M."/>
            <person name="Gaillardin C."/>
            <person name="Tallada V.A."/>
            <person name="Garzon A."/>
            <person name="Thode G."/>
            <person name="Daga R.R."/>
            <person name="Cruzado L."/>
            <person name="Jimenez J."/>
            <person name="Sanchez M."/>
            <person name="del Rey F."/>
            <person name="Benito J."/>
            <person name="Dominguez A."/>
            <person name="Revuelta J.L."/>
            <person name="Moreno S."/>
            <person name="Armstrong J."/>
            <person name="Forsburg S.L."/>
            <person name="Cerutti L."/>
            <person name="Lowe T."/>
            <person name="McCombie W.R."/>
            <person name="Paulsen I."/>
            <person name="Potashkin J."/>
            <person name="Shpakovski G.V."/>
            <person name="Ussery D."/>
            <person name="Barrell B.G."/>
            <person name="Nurse P."/>
        </authorList>
    </citation>
    <scope>NUCLEOTIDE SEQUENCE [LARGE SCALE GENOMIC DNA]</scope>
    <source>
        <strain>972 / ATCC 24843</strain>
    </source>
</reference>
<organism>
    <name type="scientific">Schizosaccharomyces pombe (strain 972 / ATCC 24843)</name>
    <name type="common">Fission yeast</name>
    <dbReference type="NCBI Taxonomy" id="284812"/>
    <lineage>
        <taxon>Eukaryota</taxon>
        <taxon>Fungi</taxon>
        <taxon>Dikarya</taxon>
        <taxon>Ascomycota</taxon>
        <taxon>Taphrinomycotina</taxon>
        <taxon>Schizosaccharomycetes</taxon>
        <taxon>Schizosaccharomycetales</taxon>
        <taxon>Schizosaccharomycetaceae</taxon>
        <taxon>Schizosaccharomyces</taxon>
    </lineage>
</organism>
<feature type="chain" id="PRO_0000104902" description="Large ribosomal subunit protein uL15A">
    <location>
        <begin position="1"/>
        <end position="148"/>
    </location>
</feature>
<feature type="region of interest" description="Disordered" evidence="2">
    <location>
        <begin position="1"/>
        <end position="36"/>
    </location>
</feature>
<feature type="compositionally biased region" description="Basic residues" evidence="2">
    <location>
        <begin position="1"/>
        <end position="13"/>
    </location>
</feature>
<feature type="compositionally biased region" description="Basic residues" evidence="2">
    <location>
        <begin position="21"/>
        <end position="31"/>
    </location>
</feature>
<feature type="strand" evidence="5">
    <location>
        <begin position="4"/>
        <end position="6"/>
    </location>
</feature>
<feature type="helix" evidence="4">
    <location>
        <begin position="8"/>
        <end position="11"/>
    </location>
</feature>
<feature type="strand" evidence="4">
    <location>
        <begin position="72"/>
        <end position="74"/>
    </location>
</feature>
<feature type="helix" evidence="4">
    <location>
        <begin position="75"/>
        <end position="77"/>
    </location>
</feature>
<feature type="helix" evidence="4">
    <location>
        <begin position="78"/>
        <end position="81"/>
    </location>
</feature>
<feature type="helix" evidence="4">
    <location>
        <begin position="84"/>
        <end position="90"/>
    </location>
</feature>
<feature type="strand" evidence="4">
    <location>
        <begin position="96"/>
        <end position="98"/>
    </location>
</feature>
<feature type="strand" evidence="4">
    <location>
        <begin position="100"/>
        <end position="102"/>
    </location>
</feature>
<feature type="helix" evidence="4">
    <location>
        <begin position="103"/>
        <end position="106"/>
    </location>
</feature>
<feature type="strand" evidence="4">
    <location>
        <begin position="109"/>
        <end position="112"/>
    </location>
</feature>
<feature type="strand" evidence="4">
    <location>
        <begin position="123"/>
        <end position="129"/>
    </location>
</feature>
<feature type="helix" evidence="4">
    <location>
        <begin position="133"/>
        <end position="140"/>
    </location>
</feature>
<feature type="strand" evidence="4">
    <location>
        <begin position="143"/>
        <end position="146"/>
    </location>
</feature>
<comment type="function">
    <text evidence="1">Component of the ribosome, a large ribonucleoprotein complex responsible for the synthesis of proteins in the cell. The small ribosomal subunit (SSU) binds messenger RNAs (mRNAs) and translates the encoded message by selecting cognate aminoacyl-transfer RNA (tRNA) molecules. The large subunit (LSU) contains the ribosomal catalytic site termed the peptidyl transferase center (PTC), which catalyzes the formation of peptide bonds, thereby polymerizing the amino acids delivered by tRNAs into a polypeptide chain. The nascent polypeptides leave the ribosome through a tunnel in the LSU and interact with protein factors that function in enzymatic processing, targeting, and the membrane insertion of nascent chains at the exit of the ribosomal tunnel.</text>
</comment>
<comment type="subunit">
    <text evidence="1">Component of the large ribosomal subunit (LSU). Mature yeast ribosomes consist of a small (40S) and a large (60S) subunit. The 40S small subunit contains 1 molecule of ribosomal RNA (18S rRNA) and at least 33 different proteins. The large 60S subunit contains 3 rRNA molecules (25S, 5.8S and 5S rRNA) and at least 46 different proteins.</text>
</comment>
<comment type="subcellular location">
    <subcellularLocation>
        <location evidence="1">Cytoplasm</location>
    </subcellularLocation>
</comment>
<comment type="miscellaneous">
    <text>There are 2 genes for uL15 in S.pombe.</text>
</comment>
<comment type="similarity">
    <text evidence="3">Belongs to the universal ribosomal protein uL15 family.</text>
</comment>
<proteinExistence type="evidence at protein level"/>
<gene>
    <name type="primary">rpl2802</name>
    <name type="synonym">rpl27a</name>
    <name type="synonym">rpl28</name>
    <name type="synonym">rpl28a</name>
    <name type="synonym">rpl29</name>
    <name type="ORF">SPCC5E4.07</name>
</gene>
<sequence length="148" mass="16653">MPTHVSKTRKLRGHVSAGHGRIGKHRKHPGGRGKAGGLQHLRSHFDKYHPGYFGKVGMRRFHLMKNPLWRPTVNLDRLWTLLPNEARDKYLGKNTEVAPVINVLQSGYGKVLGKGRLPETPVIVQTRYVSRRAEEKIKQAGGVVELIA</sequence>
<name>RL28A_SCHPO</name>